<feature type="initiator methionine" description="Removed" evidence="26">
    <location>
        <position position="1"/>
    </location>
</feature>
<feature type="chain" id="PRO_0000079770" description="Disabled homolog 2">
    <location>
        <begin position="2"/>
        <end position="770"/>
    </location>
</feature>
<feature type="domain" description="PID" evidence="4">
    <location>
        <begin position="45"/>
        <end position="196"/>
    </location>
</feature>
<feature type="region of interest" description="Disordered" evidence="5">
    <location>
        <begin position="1"/>
        <end position="38"/>
    </location>
</feature>
<feature type="region of interest" description="Required for localization to clathrin-coated pits" evidence="1">
    <location>
        <begin position="230"/>
        <end position="447"/>
    </location>
</feature>
<feature type="region of interest" description="Disordered" evidence="5">
    <location>
        <begin position="284"/>
        <end position="482"/>
    </location>
</feature>
<feature type="region of interest" description="Sufficient for interaction with GRB2" evidence="1">
    <location>
        <begin position="604"/>
        <end position="732"/>
    </location>
</feature>
<feature type="region of interest" description="Disordered" evidence="5">
    <location>
        <begin position="604"/>
        <end position="629"/>
    </location>
</feature>
<feature type="region of interest" description="Required for interaction with CSK" evidence="1">
    <location>
        <begin position="619"/>
        <end position="627"/>
    </location>
</feature>
<feature type="region of interest" description="Required for interaction with MYO6" evidence="1">
    <location>
        <begin position="649"/>
        <end position="770"/>
    </location>
</feature>
<feature type="region of interest" description="Required for interaction with GRB2 and CSK" evidence="1">
    <location>
        <begin position="663"/>
        <end position="671"/>
    </location>
</feature>
<feature type="region of interest" description="Sufficient for interaction with SH3KBP1 SH3 domain" evidence="1">
    <location>
        <begin position="709"/>
        <end position="725"/>
    </location>
</feature>
<feature type="region of interest" description="Disordered" evidence="5">
    <location>
        <begin position="742"/>
        <end position="770"/>
    </location>
</feature>
<feature type="short sequence motif" description="DPF 1">
    <location>
        <begin position="293"/>
        <end position="295"/>
    </location>
</feature>
<feature type="short sequence motif" description="DPF 2">
    <location>
        <begin position="298"/>
        <end position="300"/>
    </location>
</feature>
<feature type="compositionally biased region" description="Polar residues" evidence="5">
    <location>
        <begin position="1"/>
        <end position="16"/>
    </location>
</feature>
<feature type="compositionally biased region" description="Polar residues" evidence="5">
    <location>
        <begin position="302"/>
        <end position="313"/>
    </location>
</feature>
<feature type="compositionally biased region" description="Polar residues" evidence="5">
    <location>
        <begin position="366"/>
        <end position="396"/>
    </location>
</feature>
<feature type="compositionally biased region" description="Polar residues" evidence="5">
    <location>
        <begin position="407"/>
        <end position="425"/>
    </location>
</feature>
<feature type="compositionally biased region" description="Polar residues" evidence="5">
    <location>
        <begin position="466"/>
        <end position="480"/>
    </location>
</feature>
<feature type="compositionally biased region" description="Polar residues" evidence="5">
    <location>
        <begin position="604"/>
        <end position="616"/>
    </location>
</feature>
<feature type="compositionally biased region" description="Low complexity" evidence="5">
    <location>
        <begin position="745"/>
        <end position="758"/>
    </location>
</feature>
<feature type="modified residue" description="N-acetylserine" evidence="26">
    <location>
        <position position="2"/>
    </location>
</feature>
<feature type="modified residue" description="Phosphoserine" evidence="2">
    <location>
        <position position="2"/>
    </location>
</feature>
<feature type="modified residue" description="Phosphotyrosine" evidence="3">
    <location>
        <position position="170"/>
    </location>
</feature>
<feature type="modified residue" description="Phosphoserine" evidence="3">
    <location>
        <position position="193"/>
    </location>
</feature>
<feature type="modified residue" description="Phosphoserine; in mitosis" evidence="2">
    <location>
        <position position="326"/>
    </location>
</feature>
<feature type="modified residue" description="Phosphoserine; in mitosis" evidence="2">
    <location>
        <position position="328"/>
    </location>
</feature>
<feature type="modified residue" description="Phosphoserine" evidence="24 25 27 28 29">
    <location>
        <position position="401"/>
    </location>
</feature>
<feature type="modified residue" description="Phosphoserine" evidence="28">
    <location>
        <position position="675"/>
    </location>
</feature>
<feature type="modified residue" description="Phosphoserine" evidence="28">
    <location>
        <position position="723"/>
    </location>
</feature>
<feature type="modified residue" description="Phosphoserine" evidence="3">
    <location>
        <position position="729"/>
    </location>
</feature>
<feature type="splice variant" id="VSP_038401" description="In isoform 3." evidence="21 22">
    <location>
        <begin position="209"/>
        <end position="229"/>
    </location>
</feature>
<feature type="splice variant" id="VSP_004181" description="In isoform 2." evidence="23">
    <location>
        <begin position="230"/>
        <end position="447"/>
    </location>
</feature>
<feature type="sequence variant" id="VAR_031705" description="In dbSNP:rs700241.">
    <original>T</original>
    <variation>I</variation>
    <location>
        <position position="586"/>
    </location>
</feature>
<feature type="sequence variant" id="VAR_050942" description="In dbSNP:rs3733801.">
    <original>S</original>
    <variation>N</variation>
    <location>
        <position position="634"/>
    </location>
</feature>
<feature type="mutagenesis site" description="Impairs TGF-beta receptor signaling, no effect on interaction with SMAD2." evidence="8">
    <original>F</original>
    <variation>A</variation>
    <location>
        <position position="166"/>
    </location>
</feature>
<feature type="mutagenesis site" description="Greatly reduced binding to MYO6." evidence="9">
    <original>SYF</original>
    <variation>AAA</variation>
    <location>
        <begin position="684"/>
        <end position="686"/>
    </location>
</feature>
<feature type="mutagenesis site" description="Abolishes interaction with SH3KBP1." evidence="11">
    <original>R</original>
    <variation>A</variation>
    <location>
        <position position="720"/>
    </location>
</feature>
<feature type="sequence conflict" description="In Ref. 8; AAA93195." evidence="23" ref="8">
    <original>KGDG</original>
    <variation>PRVC</variation>
    <location>
        <begin position="44"/>
        <end position="47"/>
    </location>
</feature>
<feature type="sequence conflict" description="In Ref. 1; AAC50824/AAB19032, 2; AAA98975, 4; AAF23161 and 8; AAA93195." evidence="23" ref="1 2 4 8">
    <original>A</original>
    <variation>R</variation>
    <location>
        <position position="82"/>
    </location>
</feature>
<feature type="sequence conflict" description="In Ref. 2; AAA98975." evidence="23" ref="2">
    <original>A</original>
    <variation>T</variation>
    <location>
        <position position="148"/>
    </location>
</feature>
<feature type="sequence conflict" description="In Ref. 2; AAA98975." evidence="23" ref="2">
    <original>M</original>
    <variation>R</variation>
    <location>
        <position position="197"/>
    </location>
</feature>
<feature type="sequence conflict" description="In Ref. 3; AAF05540 and 8; AAA93195." evidence="23" ref="3 8">
    <original>ESK</original>
    <variation>VCF</variation>
    <location>
        <begin position="230"/>
        <end position="232"/>
    </location>
</feature>
<feature type="sequence conflict" description="In Ref. 1; AAC50824." evidence="23" ref="1">
    <original>L</original>
    <variation>S</variation>
    <location>
        <position position="275"/>
    </location>
</feature>
<feature type="sequence conflict" description="In Ref. 8; AAA93195." evidence="23" ref="8">
    <original>QPD</original>
    <variation>HTR</variation>
    <location>
        <begin position="302"/>
        <end position="304"/>
    </location>
</feature>
<feature type="sequence conflict" description="In Ref. 3; AAF05540." evidence="23" ref="3">
    <original>L</original>
    <variation>Q</variation>
    <location>
        <position position="498"/>
    </location>
</feature>
<feature type="strand" evidence="30">
    <location>
        <begin position="29"/>
        <end position="31"/>
    </location>
</feature>
<feature type="helix" evidence="31">
    <location>
        <begin position="36"/>
        <end position="43"/>
    </location>
</feature>
<feature type="turn" evidence="30">
    <location>
        <begin position="44"/>
        <end position="46"/>
    </location>
</feature>
<feature type="strand" evidence="31">
    <location>
        <begin position="48"/>
        <end position="59"/>
    </location>
</feature>
<feature type="strand" evidence="31">
    <location>
        <begin position="61"/>
        <end position="63"/>
    </location>
</feature>
<feature type="helix" evidence="31">
    <location>
        <begin position="66"/>
        <end position="85"/>
    </location>
</feature>
<feature type="strand" evidence="31">
    <location>
        <begin position="91"/>
        <end position="98"/>
    </location>
</feature>
<feature type="strand" evidence="31">
    <location>
        <begin position="101"/>
        <end position="106"/>
    </location>
</feature>
<feature type="turn" evidence="31">
    <location>
        <begin position="107"/>
        <end position="109"/>
    </location>
</feature>
<feature type="strand" evidence="31">
    <location>
        <begin position="112"/>
        <end position="116"/>
    </location>
</feature>
<feature type="helix" evidence="31">
    <location>
        <begin position="118"/>
        <end position="120"/>
    </location>
</feature>
<feature type="strand" evidence="31">
    <location>
        <begin position="121"/>
        <end position="126"/>
    </location>
</feature>
<feature type="strand" evidence="31">
    <location>
        <begin position="133"/>
        <end position="138"/>
    </location>
</feature>
<feature type="strand" evidence="31">
    <location>
        <begin position="145"/>
        <end position="153"/>
    </location>
</feature>
<feature type="helix" evidence="31">
    <location>
        <begin position="156"/>
        <end position="180"/>
    </location>
</feature>
<reference key="1">
    <citation type="journal article" date="1996" name="Genomics">
        <title>Sequence, genomic structure, and chromosomal assignment of human DOC-2.</title>
        <authorList>
            <person name="Albertsen H.M."/>
            <person name="Smith S.A."/>
            <person name="Melis R."/>
            <person name="Williams B."/>
            <person name="Holik P."/>
            <person name="Stevens J."/>
            <person name="White R."/>
        </authorList>
    </citation>
    <scope>NUCLEOTIDE SEQUENCE [GENOMIC DNA / MRNA] (ISOFORM 1)</scope>
</reference>
<reference key="2">
    <citation type="journal article" date="1998" name="Oncogene">
        <title>DOC-2, a candidate tumor suppressor gene in human epithelial ovarian cancer.</title>
        <authorList>
            <person name="Mok S.C."/>
            <person name="Chan W.Y."/>
            <person name="Wong K.-K."/>
            <person name="Cheung K.K."/>
            <person name="Lau C.C."/>
            <person name="Ng S.W."/>
            <person name="Baldini A."/>
            <person name="Colitti C.V."/>
            <person name="Rock C.O."/>
            <person name="Berkowitz R.S."/>
        </authorList>
    </citation>
    <scope>NUCLEOTIDE SEQUENCE [MRNA] (ISOFORM 1)</scope>
    <scope>TISSUE SPECIFICITY</scope>
    <scope>ALTERNATIVE SPLICING</scope>
    <source>
        <tissue>Ovary</tissue>
    </source>
</reference>
<reference key="3">
    <citation type="journal article" date="1999" name="Oncogene">
        <title>Disabled-2 inactivation is an early step in ovarian tumorigenicity.</title>
        <authorList>
            <person name="Fazili Z."/>
            <person name="Sun W."/>
            <person name="Mittelstaedt S."/>
            <person name="Cohen C."/>
            <person name="Xu X.-X."/>
        </authorList>
    </citation>
    <scope>NUCLEOTIDE SEQUENCE [MRNA] (ISOFORM 3)</scope>
    <scope>TISSUE SPECIFICITY</scope>
</reference>
<reference key="4">
    <citation type="journal article" date="2000" name="Genomics">
        <title>Structure, sequence, and promoter analysis of human disabled-2 gene (DAB2).</title>
        <authorList>
            <person name="Sheng Z."/>
            <person name="He J."/>
            <person name="Tuppen J.A."/>
            <person name="Sun W."/>
            <person name="Fazili Z."/>
            <person name="Smith E.R."/>
            <person name="Dong F.B."/>
            <person name="Xu X.-X."/>
        </authorList>
    </citation>
    <scope>NUCLEOTIDE SEQUENCE [GENOMIC DNA / MRNA] (ISOFORMS 1 AND 3)</scope>
</reference>
<reference key="5">
    <citation type="journal article" date="2004" name="Nature">
        <title>The DNA sequence and comparative analysis of human chromosome 5.</title>
        <authorList>
            <person name="Schmutz J."/>
            <person name="Martin J."/>
            <person name="Terry A."/>
            <person name="Couronne O."/>
            <person name="Grimwood J."/>
            <person name="Lowry S."/>
            <person name="Gordon L.A."/>
            <person name="Scott D."/>
            <person name="Xie G."/>
            <person name="Huang W."/>
            <person name="Hellsten U."/>
            <person name="Tran-Gyamfi M."/>
            <person name="She X."/>
            <person name="Prabhakar S."/>
            <person name="Aerts A."/>
            <person name="Altherr M."/>
            <person name="Bajorek E."/>
            <person name="Black S."/>
            <person name="Branscomb E."/>
            <person name="Caoile C."/>
            <person name="Challacombe J.F."/>
            <person name="Chan Y.M."/>
            <person name="Denys M."/>
            <person name="Detter J.C."/>
            <person name="Escobar J."/>
            <person name="Flowers D."/>
            <person name="Fotopulos D."/>
            <person name="Glavina T."/>
            <person name="Gomez M."/>
            <person name="Gonzales E."/>
            <person name="Goodstein D."/>
            <person name="Grigoriev I."/>
            <person name="Groza M."/>
            <person name="Hammon N."/>
            <person name="Hawkins T."/>
            <person name="Haydu L."/>
            <person name="Israni S."/>
            <person name="Jett J."/>
            <person name="Kadner K."/>
            <person name="Kimball H."/>
            <person name="Kobayashi A."/>
            <person name="Lopez F."/>
            <person name="Lou Y."/>
            <person name="Martinez D."/>
            <person name="Medina C."/>
            <person name="Morgan J."/>
            <person name="Nandkeshwar R."/>
            <person name="Noonan J.P."/>
            <person name="Pitluck S."/>
            <person name="Pollard M."/>
            <person name="Predki P."/>
            <person name="Priest J."/>
            <person name="Ramirez L."/>
            <person name="Retterer J."/>
            <person name="Rodriguez A."/>
            <person name="Rogers S."/>
            <person name="Salamov A."/>
            <person name="Salazar A."/>
            <person name="Thayer N."/>
            <person name="Tice H."/>
            <person name="Tsai M."/>
            <person name="Ustaszewska A."/>
            <person name="Vo N."/>
            <person name="Wheeler J."/>
            <person name="Wu K."/>
            <person name="Yang J."/>
            <person name="Dickson M."/>
            <person name="Cheng J.-F."/>
            <person name="Eichler E.E."/>
            <person name="Olsen A."/>
            <person name="Pennacchio L.A."/>
            <person name="Rokhsar D.S."/>
            <person name="Richardson P."/>
            <person name="Lucas S.M."/>
            <person name="Myers R.M."/>
            <person name="Rubin E.M."/>
        </authorList>
    </citation>
    <scope>NUCLEOTIDE SEQUENCE [LARGE SCALE GENOMIC DNA]</scope>
</reference>
<reference key="6">
    <citation type="submission" date="2005-07" db="EMBL/GenBank/DDBJ databases">
        <authorList>
            <person name="Mural R.J."/>
            <person name="Istrail S."/>
            <person name="Sutton G.G."/>
            <person name="Florea L."/>
            <person name="Halpern A.L."/>
            <person name="Mobarry C.M."/>
            <person name="Lippert R."/>
            <person name="Walenz B."/>
            <person name="Shatkay H."/>
            <person name="Dew I."/>
            <person name="Miller J.R."/>
            <person name="Flanigan M.J."/>
            <person name="Edwards N.J."/>
            <person name="Bolanos R."/>
            <person name="Fasulo D."/>
            <person name="Halldorsson B.V."/>
            <person name="Hannenhalli S."/>
            <person name="Turner R."/>
            <person name="Yooseph S."/>
            <person name="Lu F."/>
            <person name="Nusskern D.R."/>
            <person name="Shue B.C."/>
            <person name="Zheng X.H."/>
            <person name="Zhong F."/>
            <person name="Delcher A.L."/>
            <person name="Huson D.H."/>
            <person name="Kravitz S.A."/>
            <person name="Mouchard L."/>
            <person name="Reinert K."/>
            <person name="Remington K.A."/>
            <person name="Clark A.G."/>
            <person name="Waterman M.S."/>
            <person name="Eichler E.E."/>
            <person name="Adams M.D."/>
            <person name="Hunkapiller M.W."/>
            <person name="Myers E.W."/>
            <person name="Venter J.C."/>
        </authorList>
    </citation>
    <scope>NUCLEOTIDE SEQUENCE [LARGE SCALE GENOMIC DNA]</scope>
</reference>
<reference key="7">
    <citation type="journal article" date="2004" name="Genome Res.">
        <title>The status, quality, and expansion of the NIH full-length cDNA project: the Mammalian Gene Collection (MGC).</title>
        <authorList>
            <consortium name="The MGC Project Team"/>
        </authorList>
    </citation>
    <scope>NUCLEOTIDE SEQUENCE [LARGE SCALE MRNA] (ISOFORM 1)</scope>
    <source>
        <tissue>Placenta</tissue>
    </source>
</reference>
<reference key="8">
    <citation type="journal article" date="1994" name="Gynecol. Oncol.">
        <title>Molecular cloning of differentially expressed genes in human epithelial ovarian cancer.</title>
        <authorList>
            <person name="Mok S.C."/>
            <person name="Wong K.-K."/>
            <person name="Chan R.K.W."/>
            <person name="Lau C.C."/>
            <person name="Tsao S.-W."/>
            <person name="Knapp R.C."/>
            <person name="Berkowitz R.S."/>
        </authorList>
    </citation>
    <scope>NUCLEOTIDE SEQUENCE [MRNA] OF 44-304 (ISOFORM 1)</scope>
    <source>
        <tissue>Ovary</tissue>
    </source>
</reference>
<reference key="9">
    <citation type="journal article" date="2000" name="Biochem. J.">
        <title>Cytosolic adaptor protein Dab2 is an intracellular ligand of endocytic receptor gp600/megalin.</title>
        <authorList>
            <person name="Oleinikov A.V."/>
            <person name="Zhao J."/>
            <person name="Makker S.P."/>
        </authorList>
    </citation>
    <scope>INTERACTION WITH LRP2</scope>
</reference>
<reference key="10">
    <citation type="journal article" date="2001" name="EMBO J.">
        <title>The adaptor molecule Disabled-2 links the transforming growth factor beta receptors to the Smad pathway.</title>
        <authorList>
            <person name="Hocevar B.A."/>
            <person name="Smine A."/>
            <person name="Xu X.X."/>
            <person name="Howe P.H."/>
        </authorList>
    </citation>
    <scope>FUNCTION</scope>
    <scope>INTERACTION WITH SMAD2; SMAD3; TGFBR1 AND TGFBR2</scope>
    <scope>MUTAGENESIS OF PHE-166</scope>
</reference>
<reference key="11">
    <citation type="journal article" date="2002" name="Traffic">
        <title>Myosin VI binds to and localises with Dab2, potentially linking receptor-mediated endocytosis and the actin cytoskeleton.</title>
        <authorList>
            <person name="Morris S.M."/>
            <person name="Arden S.D."/>
            <person name="Roberts R.C."/>
            <person name="Kendrick-Jones J."/>
            <person name="Cooper J.A."/>
            <person name="Luzio J.P."/>
            <person name="Buss F."/>
        </authorList>
    </citation>
    <scope>INTERACTION WITH MYO6</scope>
    <scope>SUBCELLULAR LOCATION</scope>
    <scope>MUTAGENESIS OF 684-SER--PHE-686</scope>
</reference>
<reference key="12">
    <citation type="journal article" date="2003" name="EMBO J.">
        <title>Regulation of the Wnt signaling pathway by disabled-2 (Dab2).</title>
        <authorList>
            <person name="Howe P.H."/>
        </authorList>
    </citation>
    <scope>FUNCTION</scope>
    <scope>INTERACTION WITH DVL3 AND AXIN1</scope>
</reference>
<reference key="13">
    <citation type="journal article" date="2003" name="FEBS Lett.">
        <title>Dab2 links CIN85 with clathrin-mediated receptor internalization.</title>
        <authorList>
            <person name="Kowanetz K."/>
            <person name="Terzic J."/>
            <person name="Dikic I."/>
        </authorList>
    </citation>
    <scope>INTERACTION WITH SH3KBP1</scope>
    <scope>MUTAGENESIS OF ARG-720</scope>
</reference>
<reference key="14">
    <citation type="journal article" date="2004" name="Biochimie">
        <title>The adaptor disabled-2 binds to the third psi xNPxY sequence on the cytoplasmic tail of megalin.</title>
        <authorList>
            <person name="Gallagher H."/>
            <person name="Oleinikov A.V."/>
            <person name="Fenske C."/>
            <person name="Newman D.J."/>
        </authorList>
    </citation>
    <scope>INTERACTION WITH LRP2</scope>
    <scope>TISSUE SPECIFICITY</scope>
</reference>
<reference key="15">
    <citation type="journal article" date="2005" name="Cancer Res.">
        <title>The role of DOC-2/DAB2 in modulating androgen receptor-mediated cell growth via the nongenomic c-Src-mediated pathway in normal prostatic epithelium and cancer.</title>
        <authorList>
            <person name="Zhoul J."/>
            <person name="Hernandez G."/>
            <person name="Tu S.W."/>
            <person name="Huang C.L."/>
            <person name="Tseng C.P."/>
            <person name="Hsieh J.T."/>
        </authorList>
    </citation>
    <scope>FUNCTION</scope>
</reference>
<reference key="16">
    <citation type="journal article" date="2006" name="J. Cell Sci.">
        <title>The adaptor protein Dab2 sorts LDL receptors into coated pits independently of AP-2 and ARH.</title>
        <authorList>
            <person name="Maurer M.E."/>
            <person name="Cooper J.A."/>
        </authorList>
    </citation>
    <scope>FUNCTION</scope>
</reference>
<reference key="17">
    <citation type="journal article" date="2006" name="Nat. Biotechnol.">
        <title>A probability-based approach for high-throughput protein phosphorylation analysis and site localization.</title>
        <authorList>
            <person name="Beausoleil S.A."/>
            <person name="Villen J."/>
            <person name="Gerber S.A."/>
            <person name="Rush J."/>
            <person name="Gygi S.P."/>
        </authorList>
    </citation>
    <scope>PHOSPHORYLATION [LARGE SCALE ANALYSIS] AT SER-401</scope>
    <scope>IDENTIFICATION BY MASS SPECTROMETRY [LARGE SCALE ANALYSIS]</scope>
    <source>
        <tissue>Cervix carcinoma</tissue>
    </source>
</reference>
<reference key="18">
    <citation type="journal article" date="2008" name="Proc. Natl. Acad. Sci. U.S.A.">
        <title>A quantitative atlas of mitotic phosphorylation.</title>
        <authorList>
            <person name="Dephoure N."/>
            <person name="Zhou C."/>
            <person name="Villen J."/>
            <person name="Beausoleil S.A."/>
            <person name="Bakalarski C.E."/>
            <person name="Elledge S.J."/>
            <person name="Gygi S.P."/>
        </authorList>
    </citation>
    <scope>PHOSPHORYLATION [LARGE SCALE ANALYSIS] AT SER-401</scope>
    <scope>IDENTIFICATION BY MASS SPECTROMETRY [LARGE SCALE ANALYSIS]</scope>
    <source>
        <tissue>Cervix carcinoma</tissue>
    </source>
</reference>
<reference key="19">
    <citation type="journal article" date="2009" name="Anal. Chem.">
        <title>Lys-N and trypsin cover complementary parts of the phosphoproteome in a refined SCX-based approach.</title>
        <authorList>
            <person name="Gauci S."/>
            <person name="Helbig A.O."/>
            <person name="Slijper M."/>
            <person name="Krijgsveld J."/>
            <person name="Heck A.J."/>
            <person name="Mohammed S."/>
        </authorList>
    </citation>
    <scope>ACETYLATION [LARGE SCALE ANALYSIS] AT SER-2</scope>
    <scope>CLEAVAGE OF INITIATOR METHIONINE [LARGE SCALE ANALYSIS]</scope>
    <scope>IDENTIFICATION BY MASS SPECTROMETRY [LARGE SCALE ANALYSIS]</scope>
</reference>
<reference key="20">
    <citation type="journal article" date="2009" name="FEBS Lett.">
        <title>Focal adhesion disassembly requires clathrin-dependent endocytosis of integrins.</title>
        <authorList>
            <person name="Chao W.T."/>
            <person name="Kunz J."/>
        </authorList>
    </citation>
    <scope>FUNCTION</scope>
</reference>
<reference key="21">
    <citation type="journal article" date="2010" name="Sci. Signal.">
        <title>Quantitative phosphoproteomics reveals widespread full phosphorylation site occupancy during mitosis.</title>
        <authorList>
            <person name="Olsen J.V."/>
            <person name="Vermeulen M."/>
            <person name="Santamaria A."/>
            <person name="Kumar C."/>
            <person name="Miller M.L."/>
            <person name="Jensen L.J."/>
            <person name="Gnad F."/>
            <person name="Cox J."/>
            <person name="Jensen T.S."/>
            <person name="Nigg E.A."/>
            <person name="Brunak S."/>
            <person name="Mann M."/>
        </authorList>
    </citation>
    <scope>PHOSPHORYLATION [LARGE SCALE ANALYSIS] AT SER-401</scope>
    <scope>IDENTIFICATION BY MASS SPECTROMETRY [LARGE SCALE ANALYSIS]</scope>
    <source>
        <tissue>Cervix carcinoma</tissue>
    </source>
</reference>
<reference key="22">
    <citation type="journal article" date="2011" name="BMC Syst. Biol.">
        <title>Initial characterization of the human central proteome.</title>
        <authorList>
            <person name="Burkard T.R."/>
            <person name="Planyavsky M."/>
            <person name="Kaupe I."/>
            <person name="Breitwieser F.P."/>
            <person name="Buerckstuemmer T."/>
            <person name="Bennett K.L."/>
            <person name="Superti-Furga G."/>
            <person name="Colinge J."/>
        </authorList>
    </citation>
    <scope>IDENTIFICATION BY MASS SPECTROMETRY [LARGE SCALE ANALYSIS]</scope>
</reference>
<reference key="23">
    <citation type="journal article" date="2011" name="J. Biol. Chem.">
        <title>Negative regulation of the endocytic adaptor disabled-2 (Dab2) in mitosis.</title>
        <authorList>
            <person name="Chetrit D."/>
            <person name="Barzilay L."/>
            <person name="Horn G."/>
            <person name="Bielik T."/>
            <person name="Smorodinsky N.I."/>
            <person name="Ehrlich M."/>
        </authorList>
    </citation>
    <scope>SUBCELLULAR LOCATION</scope>
</reference>
<reference key="24">
    <citation type="journal article" date="2012" name="Biochem. J.">
        <title>Dab2 is a key regulator of endocytosis and post-endocytic trafficking of the cystic fibrosis transmembrane conductance regulator.</title>
        <authorList>
            <person name="Fu L."/>
            <person name="Rab A."/>
            <person name="Tang L.P."/>
            <person name="Rowe S.M."/>
            <person name="Bebok Z."/>
            <person name="Collawn J.F."/>
        </authorList>
    </citation>
    <scope>FUNCTION</scope>
</reference>
<reference key="25">
    <citation type="journal article" date="2012" name="EMBO J.">
        <title>Disabled-2 (Dab2) inhibits Wnt/beta-catenin signalling by binding LRP6 and promoting its internalization through clathrin.</title>
        <authorList>
            <person name="Jiang Y."/>
            <person name="He X."/>
            <person name="Howe P.H."/>
        </authorList>
    </citation>
    <scope>FUNCTION</scope>
    <scope>INTERACTION WITH LRP6</scope>
</reference>
<reference key="26">
    <citation type="journal article" date="2012" name="Mol. Biol. Cell">
        <title>FCH domain only-2 organizes clathrin-coated structures and interacts with Disabled-2 for low-density lipoprotein receptor endocytosis.</title>
        <authorList>
            <person name="Mulkearns E.E."/>
            <person name="Cooper J.A."/>
        </authorList>
    </citation>
    <scope>FUNCTION IN ENDOCYTOSIS</scope>
    <scope>INTERACTION WITH FCHO2</scope>
</reference>
<reference key="27">
    <citation type="journal article" date="2012" name="Nat. Cell Biol.">
        <title>Distinct and separable activities of the endocytic clathrin-coat components Fcho1/2 and AP-2 in developmental patterning.</title>
        <authorList>
            <person name="Umasankar P.K."/>
            <person name="Sanker S."/>
            <person name="Thieman J.R."/>
            <person name="Chakraborty S."/>
            <person name="Wendland B."/>
            <person name="Tsang M."/>
            <person name="Traub L.M."/>
        </authorList>
    </citation>
    <scope>INTERACTION WITH FCHO1</scope>
</reference>
<reference key="28">
    <citation type="journal article" date="2013" name="J. Proteome Res.">
        <title>Toward a comprehensive characterization of a human cancer cell phosphoproteome.</title>
        <authorList>
            <person name="Zhou H."/>
            <person name="Di Palma S."/>
            <person name="Preisinger C."/>
            <person name="Peng M."/>
            <person name="Polat A.N."/>
            <person name="Heck A.J."/>
            <person name="Mohammed S."/>
        </authorList>
    </citation>
    <scope>PHOSPHORYLATION [LARGE SCALE ANALYSIS] AT SER-401; SER-675 AND SER-723</scope>
    <scope>IDENTIFICATION BY MASS SPECTROMETRY [LARGE SCALE ANALYSIS]</scope>
    <source>
        <tissue>Cervix carcinoma</tissue>
        <tissue>Erythroleukemia</tissue>
    </source>
</reference>
<reference key="29">
    <citation type="journal article" date="2014" name="J. Proteomics">
        <title>An enzyme assisted RP-RPLC approach for in-depth analysis of human liver phosphoproteome.</title>
        <authorList>
            <person name="Bian Y."/>
            <person name="Song C."/>
            <person name="Cheng K."/>
            <person name="Dong M."/>
            <person name="Wang F."/>
            <person name="Huang J."/>
            <person name="Sun D."/>
            <person name="Wang L."/>
            <person name="Ye M."/>
            <person name="Zou H."/>
        </authorList>
    </citation>
    <scope>PHOSPHORYLATION [LARGE SCALE ANALYSIS] AT SER-401</scope>
    <scope>IDENTIFICATION BY MASS SPECTROMETRY [LARGE SCALE ANALYSIS]</scope>
    <source>
        <tissue>Liver</tissue>
    </source>
</reference>
<evidence type="ECO:0000250" key="1"/>
<evidence type="ECO:0000250" key="2">
    <source>
        <dbReference type="UniProtKB" id="O88797"/>
    </source>
</evidence>
<evidence type="ECO:0000250" key="3">
    <source>
        <dbReference type="UniProtKB" id="P98078"/>
    </source>
</evidence>
<evidence type="ECO:0000255" key="4">
    <source>
        <dbReference type="PROSITE-ProRule" id="PRU00148"/>
    </source>
</evidence>
<evidence type="ECO:0000256" key="5">
    <source>
        <dbReference type="SAM" id="MobiDB-lite"/>
    </source>
</evidence>
<evidence type="ECO:0000269" key="6">
    <source>
    </source>
</evidence>
<evidence type="ECO:0000269" key="7">
    <source>
    </source>
</evidence>
<evidence type="ECO:0000269" key="8">
    <source>
    </source>
</evidence>
<evidence type="ECO:0000269" key="9">
    <source>
    </source>
</evidence>
<evidence type="ECO:0000269" key="10">
    <source>
    </source>
</evidence>
<evidence type="ECO:0000269" key="11">
    <source>
    </source>
</evidence>
<evidence type="ECO:0000269" key="12">
    <source>
    </source>
</evidence>
<evidence type="ECO:0000269" key="13">
    <source>
    </source>
</evidence>
<evidence type="ECO:0000269" key="14">
    <source>
    </source>
</evidence>
<evidence type="ECO:0000269" key="15">
    <source>
    </source>
</evidence>
<evidence type="ECO:0000269" key="16">
    <source>
    </source>
</evidence>
<evidence type="ECO:0000269" key="17">
    <source>
    </source>
</evidence>
<evidence type="ECO:0000269" key="18">
    <source>
    </source>
</evidence>
<evidence type="ECO:0000269" key="19">
    <source>
    </source>
</evidence>
<evidence type="ECO:0000269" key="20">
    <source>
    </source>
</evidence>
<evidence type="ECO:0000303" key="21">
    <source>
    </source>
</evidence>
<evidence type="ECO:0000303" key="22">
    <source>
    </source>
</evidence>
<evidence type="ECO:0000305" key="23"/>
<evidence type="ECO:0007744" key="24">
    <source>
    </source>
</evidence>
<evidence type="ECO:0007744" key="25">
    <source>
    </source>
</evidence>
<evidence type="ECO:0007744" key="26">
    <source>
    </source>
</evidence>
<evidence type="ECO:0007744" key="27">
    <source>
    </source>
</evidence>
<evidence type="ECO:0007744" key="28">
    <source>
    </source>
</evidence>
<evidence type="ECO:0007744" key="29">
    <source>
    </source>
</evidence>
<evidence type="ECO:0007829" key="30">
    <source>
        <dbReference type="PDB" id="2LSW"/>
    </source>
</evidence>
<evidence type="ECO:0007829" key="31">
    <source>
        <dbReference type="PDB" id="6O5O"/>
    </source>
</evidence>
<proteinExistence type="evidence at protein level"/>
<comment type="function">
    <text evidence="8 10 13 14 15 16 17 19">Adapter protein that functions as a clathrin-associated sorting protein (CLASP) required for clathrin-mediated endocytosis of selected cargo proteins. Can bind and assemble clathrin, and binds simultaneously to phosphatidylinositol 4,5-bisphosphate (PtdIns(4,5)P2) and cargos containing non-phosphorylated NPXY internalization motifs, such as the LDL receptor, to recruit them to clathrin-coated pits. Can function in clathrin-mediated endocytosis independently of the AP-2 complex. Involved in endocytosis of integrin beta-1; this function seems to redundant with the AP-2 complex and seems to require DAB2 binding to endocytosis accessory EH domain-containing proteins such as EPS15, EPS15L1 and ITSN1. Involved in endocytosis of cystic fibrosis transmembrane conductance regulator/CFTR. Involved in endocytosis of megalin/LRP2 lipoprotein receptor during embryonal development. Required for recycling of the TGF-beta receptor. Involved in CFTR trafficking to the late endosome. Involved in several receptor-mediated signaling pathways. Involved in TGF-beta receptor signaling and facilitates phosphorylation of the signal transducer SMAD2. Mediates TFG-beta-stimulated JNK activation. May inhibit the canoniocal Wnt/beta-catenin signaling pathway by stabilizing the beta-catenin destruction complex through a competing association with axin preventing its dephosphorylation through protein phosphatase 1 (PP1). Sequesters LRP6 towards clathrin-mediated endocytosis, leading to inhibition of Wnt/beta-catenin signaling. May activate non-canonical Wnt signaling. In cell surface growth factor/Ras signaling pathways proposed to inhibit ERK activation by interrupting the binding of GRB2 to SOS1 and to inhibit SRC by preventing its activating phosphorylation at 'Tyr-419'. Proposed to be involved in modulation of androgen receptor (AR) signaling mediated by SRC activation; seems to compete with AR for interaction with SRC. Plays a role in the CSF-1 signal transduction pathway. Plays a role in cellular differentiation. Involved in cell positioning and formation of visceral endoderm (VE) during embryogenesis and proposed to be required in the VE to respond to Nodal signaling coming from the epiblast. Required for the epithelial to mesenchymal transition, a process necessary for proper embryonic development. May be involved in myeloid cell differentiation and can induce macrophage adhesion and spreading. May act as a tumor suppressor.</text>
</comment>
<comment type="subunit">
    <text evidence="7 8 9 10 11 12 17 18 19 23">Interacts (via NPXY motif) with DAB2 (via PID domain). Can interact (via PID domain) with LDLR, APP, APLP1 and APLP2, and weakly with INPP5D (via NPXY motifs); the interaction is impaired by tyrosine phosphorylation of the respective NPXY motifs. Can weakly interact (via PID domain) with LRP1 (via NPXY motif); the interaction is enhanced by tyrosine phosphorylation of the NPXY motif. Interacts with LRP2 (via NPXY motif); the interaction is not affected by tyrosine phosphorylation of the NPXY motif. Interacts with clathrin; in vitro can assemble clathrin triskelia into polyhedral coats. Interacts with AP2A2, ITGB1, ITGB3, ITGB5, PIAS2, DAB2IP, NOSTRIN, FCHO1, DVL3, EPS15, ITSN1 and EPS15L1. Interacts with SH3KBP1 (via SH3 domains). Interacts with GRB2; competes with SOS1 for binding to GRB2 and the interaction is enhanced by EGF and NT-3 stimulation. Interacts with MAP3K7; the interaction is induced by TGF-beta stimulation and may mediate TGF-beta stimulated JNK activation. Interacts with AXIN1 and PPP1CA; the interactions are mutually exclusive. Interacts with the globular tail of MYO6. Interacts (via DPF motifs) with FCHO2; the interaction is direct and required for DAB2-mediated LDLR endocytosis. Interacts with LRP6; the interaction involves LRP6 phosphorylation by CK2 and sequesters LRP6 towards clathrin-mediated endocytosis. Associates with the TGF-beta receptor complex (Probable). Interacts with SMAD2 and SMAD3; the interactions are enhanced upon TGF-beta stimulation. Interacts with GRB2; the interaction is enhanced by EGF and NT-3 stimulation. Interacts with SRC; the interaction is enhanced by EGF stimulation.</text>
</comment>
<comment type="interaction">
    <interactant intactId="EBI-1171238">
        <id>P98082</id>
    </interactant>
    <interactant intactId="EBI-77613">
        <id>P05067</id>
        <label>APP</label>
    </interactant>
    <organismsDiffer>false</organismsDiffer>
    <experiments>3</experiments>
</comment>
<comment type="interaction">
    <interactant intactId="EBI-1171238">
        <id>P98082</id>
    </interactant>
    <interactant intactId="EBI-401755">
        <id>P62993</id>
        <label>GRB2</label>
    </interactant>
    <organismsDiffer>false</organismsDiffer>
    <experiments>2</experiments>
</comment>
<comment type="interaction">
    <interactant intactId="EBI-1171238">
        <id>P98082</id>
    </interactant>
    <interactant intactId="EBI-910915">
        <id>O75581</id>
        <label>LRP6</label>
    </interactant>
    <organismsDiffer>false</organismsDiffer>
    <experiments>20</experiments>
</comment>
<comment type="interaction">
    <interactant intactId="EBI-1171238">
        <id>P98082</id>
    </interactant>
    <interactant intactId="EBI-350606">
        <id>Q9UM54</id>
        <label>MYO6</label>
    </interactant>
    <organismsDiffer>false</organismsDiffer>
    <experiments>3</experiments>
</comment>
<comment type="interaction">
    <interactant intactId="EBI-1171238">
        <id>P98082</id>
    </interactant>
    <interactant intactId="EBI-389883">
        <id>P16333</id>
        <label>NCK1</label>
    </interactant>
    <organismsDiffer>false</organismsDiffer>
    <experiments>2</experiments>
</comment>
<comment type="interaction">
    <interactant intactId="EBI-1171238">
        <id>P98082</id>
    </interactant>
    <interactant intactId="EBI-1040141">
        <id>Q15796</id>
        <label>SMAD2</label>
    </interactant>
    <organismsDiffer>false</organismsDiffer>
    <experiments>4</experiments>
</comment>
<comment type="interaction">
    <interactant intactId="EBI-1171238">
        <id>P98082</id>
    </interactant>
    <interactant intactId="EBI-347161">
        <id>P84022</id>
        <label>SMAD3</label>
    </interactant>
    <organismsDiffer>false</organismsDiffer>
    <experiments>3</experiments>
</comment>
<comment type="interaction">
    <interactant intactId="EBI-1171238">
        <id>P98082</id>
    </interactant>
    <interactant intactId="EBI-990792">
        <id>P00441</id>
        <label>SOD1</label>
    </interactant>
    <organismsDiffer>false</organismsDiffer>
    <experiments>3</experiments>
</comment>
<comment type="interaction">
    <interactant intactId="EBI-15804617">
        <id>P98082-1</id>
    </interactant>
    <interactant intactId="EBI-15804516">
        <id>Q29122</id>
        <label>MYO6</label>
    </interactant>
    <organismsDiffer>true</organismsDiffer>
    <experiments>2</experiments>
</comment>
<comment type="subcellular location">
    <subcellularLocation>
        <location>Cytoplasm</location>
    </subcellularLocation>
    <subcellularLocation>
        <location>Cytoplasmic vesicle</location>
        <location>Clathrin-coated vesicle membrane</location>
    </subcellularLocation>
    <subcellularLocation>
        <location>Membrane</location>
        <location>Clathrin-coated pit</location>
    </subcellularLocation>
    <text>Colocalizes with large insert-containing isoforms of MYO6 at clathrin-coated pits/vesicles. During mitosis is progressively displaced from the membrane and translocated to the cytoplasm.</text>
</comment>
<comment type="alternative products">
    <event type="alternative splicing"/>
    <isoform>
        <id>P98082-1</id>
        <name>1</name>
        <sequence type="displayed"/>
    </isoform>
    <isoform>
        <id>P98082-2</id>
        <name>2</name>
        <sequence type="described" ref="VSP_004181"/>
    </isoform>
    <isoform>
        <id>P98082-3</id>
        <name>3</name>
        <sequence type="described" ref="VSP_038401"/>
    </isoform>
</comment>
<comment type="tissue specificity">
    <text evidence="6 12 20">Expressed in deep invaginations, inclusion cysts and the surface epithelial cells of the ovary. Also expressed in breast epithelial cells, spleen, thymus, prostate, testis, macrophages, fibroblasts, lung epithelial cells, placenta, brain stem, heart and small intestine. Expressed in kidney proximal tubular epithelial cells (at protein level).</text>
</comment>
<comment type="domain">
    <text evidence="1">The PID domain binds to predominantly non-phosphorylated NPXY internalization motifs present in members of the LDLR and APP family; it also mediates simultaneous binding to phosphatidylinositol 4,5-bisphosphate.</text>
</comment>
<comment type="domain">
    <text evidence="1">The Asn-Pro-Phe (NPF) motifs, which are found in proteins involved in the endocytic pathway, mediate the interaction with the EH domain of EPS15, EPS15R and ITSN1.</text>
</comment>
<comment type="PTM">
    <text evidence="1">Phosphorylated. Phosphorylation during mitosis is leading to membrane displacement (By similarity).</text>
</comment>
<comment type="online information" name="Atlas of Genetics and Cytogenetics in Oncology and Haematology">
    <link uri="https://atlasgeneticsoncology.org/gene/40258/DAB2"/>
</comment>
<gene>
    <name type="primary">DAB2</name>
    <name type="synonym">DOC2</name>
</gene>
<sequence length="770" mass="82448">MSNEVETSATNGQPDQQAAPKAPSKKEKKKGPEKTDEYLLARFKGDGVKYKAKLIGIDDVPDARGDKMSQDSMMKLKGMAAAGRSQGQHKQRIWVNISLSGIKIIDEKTGVIEHEHPVNKISFIARDVTDNRAFGYVCGGEGQHQFFAIKTGQQAEPLVVDLKDLFQVIYNVKKKEEEKKKIEEASKAVENGSEALMILDDQTNKLKSGVDQMDLFGDMSTPPDLNSPTESKDILLVDLNSEIDTNQNSLRENPFLTNGITSCSLPRPTPQASFLPENAFSANLNFFPTPNPDPFRDDPFTQPDQSTPSSFDSLKSPDQKKENSSSSSTPLSNGPLNGDVDYFGQQFDQISNRTGKQEAQAGPWPFSSSQTQPAVRTQNGVSEREQNGFSVKSSPNPFVGSPPKGLSIQNGVKQDLESSVQSSPHDSIAIIPPPQSTKPGRGRRTAKSSANDLLASDIFAPPVSEPSGQASPTGQPTALQPNPLDLFKTSAPAPVGPLVGLGGVTVTLPQAGPWNTASLVFNQSPSMAPGAMMGGQPSGFSQPVIFGTSPAVSGWNQPSPFAASTPPPVPVVWGPSASVAPNAWSTTSPLGNPFQSNIFPAPAVSTQPPSMHSSLLVTPPQPPPRAGPPKDISSDAFTALDPLGDKEIKDVKEMFKDFQLRQPPAVPARKGEQTSSGTLSAFASYFNSKVGIPQENADHDDFDANQLLNKINEPPKPAPRQVSLPVTKSTDNAFENPFFKDSFGSSQASVASSQPVSSEMYRDPFGNPFA</sequence>
<protein>
    <recommendedName>
        <fullName>Disabled homolog 2</fullName>
    </recommendedName>
    <alternativeName>
        <fullName>Adaptor molecule disabled-2</fullName>
    </alternativeName>
    <alternativeName>
        <fullName>Differentially expressed in ovarian carcinoma 2</fullName>
        <shortName>DOC-2</shortName>
    </alternativeName>
    <alternativeName>
        <fullName>Differentially-expressed protein 2</fullName>
    </alternativeName>
</protein>
<accession>P98082</accession>
<accession>A6NES5</accession>
<accession>Q13598</accession>
<accession>Q9BTY0</accession>
<accession>Q9UK04</accession>
<dbReference type="EMBL" id="U39050">
    <property type="protein sequence ID" value="AAC50824.1"/>
    <property type="molecule type" value="mRNA"/>
</dbReference>
<dbReference type="EMBL" id="AH003698">
    <property type="protein sequence ID" value="AAB19032.1"/>
    <property type="molecule type" value="Genomic_DNA"/>
</dbReference>
<dbReference type="EMBL" id="U53446">
    <property type="protein sequence ID" value="AAA98975.1"/>
    <property type="molecule type" value="mRNA"/>
</dbReference>
<dbReference type="EMBL" id="AF188298">
    <property type="protein sequence ID" value="AAF05540.1"/>
    <property type="molecule type" value="mRNA"/>
</dbReference>
<dbReference type="EMBL" id="AF205890">
    <property type="protein sequence ID" value="AAF23161.1"/>
    <property type="molecule type" value="Genomic_DNA"/>
</dbReference>
<dbReference type="EMBL" id="AC008916">
    <property type="status" value="NOT_ANNOTATED_CDS"/>
    <property type="molecule type" value="Genomic_DNA"/>
</dbReference>
<dbReference type="EMBL" id="CH471119">
    <property type="protein sequence ID" value="EAW55989.1"/>
    <property type="molecule type" value="Genomic_DNA"/>
</dbReference>
<dbReference type="EMBL" id="BC003064">
    <property type="protein sequence ID" value="AAH03064.1"/>
    <property type="molecule type" value="mRNA"/>
</dbReference>
<dbReference type="EMBL" id="L16886">
    <property type="protein sequence ID" value="AAA93195.1"/>
    <property type="molecule type" value="mRNA"/>
</dbReference>
<dbReference type="CCDS" id="CCDS34149.1">
    <molecule id="P98082-1"/>
</dbReference>
<dbReference type="CCDS" id="CCDS58946.1">
    <molecule id="P98082-3"/>
</dbReference>
<dbReference type="PIR" id="G02228">
    <property type="entry name" value="G02228"/>
</dbReference>
<dbReference type="RefSeq" id="NP_001231800.1">
    <molecule id="P98082-3"/>
    <property type="nucleotide sequence ID" value="NM_001244871.2"/>
</dbReference>
<dbReference type="RefSeq" id="NP_001334.2">
    <molecule id="P98082-1"/>
    <property type="nucleotide sequence ID" value="NM_001343.4"/>
</dbReference>
<dbReference type="PDB" id="2LSW">
    <property type="method" value="NMR"/>
    <property type="chains" value="A=24-58"/>
</dbReference>
<dbReference type="PDB" id="6O5O">
    <property type="method" value="X-ray"/>
    <property type="resolution" value="1.75 A"/>
    <property type="chains" value="A/B=31-191"/>
</dbReference>
<dbReference type="PDB" id="6OVF">
    <property type="method" value="X-ray"/>
    <property type="resolution" value="1.95 A"/>
    <property type="chains" value="A/B=31-191"/>
</dbReference>
<dbReference type="PDBsum" id="2LSW"/>
<dbReference type="PDBsum" id="6O5O"/>
<dbReference type="PDBsum" id="6OVF"/>
<dbReference type="BMRB" id="P98082"/>
<dbReference type="SMR" id="P98082"/>
<dbReference type="BioGRID" id="107971">
    <property type="interactions" value="155"/>
</dbReference>
<dbReference type="CORUM" id="P98082"/>
<dbReference type="DIP" id="DIP-45617N"/>
<dbReference type="ELM" id="P98082"/>
<dbReference type="FunCoup" id="P98082">
    <property type="interactions" value="1131"/>
</dbReference>
<dbReference type="IntAct" id="P98082">
    <property type="interactions" value="76"/>
</dbReference>
<dbReference type="MINT" id="P98082"/>
<dbReference type="STRING" id="9606.ENSP00000313391"/>
<dbReference type="BindingDB" id="P98082"/>
<dbReference type="GlyCosmos" id="P98082">
    <property type="glycosylation" value="5 sites, 1 glycan"/>
</dbReference>
<dbReference type="GlyGen" id="P98082">
    <property type="glycosylation" value="13 sites, 1 O-linked glycan (11 sites)"/>
</dbReference>
<dbReference type="iPTMnet" id="P98082"/>
<dbReference type="MetOSite" id="P98082"/>
<dbReference type="PhosphoSitePlus" id="P98082"/>
<dbReference type="BioMuta" id="DAB2"/>
<dbReference type="DMDM" id="145559465"/>
<dbReference type="jPOST" id="P98082"/>
<dbReference type="MassIVE" id="P98082"/>
<dbReference type="PaxDb" id="9606-ENSP00000313391"/>
<dbReference type="PeptideAtlas" id="P98082"/>
<dbReference type="ProteomicsDB" id="57786">
    <molecule id="P98082-1"/>
</dbReference>
<dbReference type="ProteomicsDB" id="57787">
    <molecule id="P98082-2"/>
</dbReference>
<dbReference type="ProteomicsDB" id="57788">
    <molecule id="P98082-3"/>
</dbReference>
<dbReference type="Pumba" id="P98082"/>
<dbReference type="Antibodypedia" id="3987">
    <property type="antibodies" value="312 antibodies from 36 providers"/>
</dbReference>
<dbReference type="DNASU" id="1601"/>
<dbReference type="Ensembl" id="ENST00000320816.11">
    <molecule id="P98082-1"/>
    <property type="protein sequence ID" value="ENSP00000313391.6"/>
    <property type="gene ID" value="ENSG00000153071.15"/>
</dbReference>
<dbReference type="Ensembl" id="ENST00000339788.10">
    <molecule id="P98082-2"/>
    <property type="protein sequence ID" value="ENSP00000345508.6"/>
    <property type="gene ID" value="ENSG00000153071.15"/>
</dbReference>
<dbReference type="Ensembl" id="ENST00000509337.5">
    <molecule id="P98082-3"/>
    <property type="protein sequence ID" value="ENSP00000426245.1"/>
    <property type="gene ID" value="ENSG00000153071.15"/>
</dbReference>
<dbReference type="Ensembl" id="ENST00000545653.5">
    <molecule id="P98082-3"/>
    <property type="protein sequence ID" value="ENSP00000439919.1"/>
    <property type="gene ID" value="ENSG00000153071.15"/>
</dbReference>
<dbReference type="GeneID" id="1601"/>
<dbReference type="KEGG" id="hsa:1601"/>
<dbReference type="MANE-Select" id="ENST00000320816.11">
    <property type="protein sequence ID" value="ENSP00000313391.6"/>
    <property type="RefSeq nucleotide sequence ID" value="NM_001343.4"/>
    <property type="RefSeq protein sequence ID" value="NP_001334.2"/>
</dbReference>
<dbReference type="UCSC" id="uc003jlw.4">
    <molecule id="P98082-1"/>
    <property type="organism name" value="human"/>
</dbReference>
<dbReference type="AGR" id="HGNC:2662"/>
<dbReference type="CTD" id="1601"/>
<dbReference type="DisGeNET" id="1601"/>
<dbReference type="GeneCards" id="DAB2"/>
<dbReference type="HGNC" id="HGNC:2662">
    <property type="gene designation" value="DAB2"/>
</dbReference>
<dbReference type="HPA" id="ENSG00000153071">
    <property type="expression patterns" value="Tissue enhanced (kidney, placenta)"/>
</dbReference>
<dbReference type="MIM" id="601236">
    <property type="type" value="gene"/>
</dbReference>
<dbReference type="neXtProt" id="NX_P98082"/>
<dbReference type="OpenTargets" id="ENSG00000153071"/>
<dbReference type="PharmGKB" id="PA27132"/>
<dbReference type="VEuPathDB" id="HostDB:ENSG00000153071"/>
<dbReference type="eggNOG" id="KOG3535">
    <property type="taxonomic scope" value="Eukaryota"/>
</dbReference>
<dbReference type="GeneTree" id="ENSGT00940000155567"/>
<dbReference type="HOGENOM" id="CLU_020747_1_0_1"/>
<dbReference type="InParanoid" id="P98082"/>
<dbReference type="OMA" id="FMSHEPI"/>
<dbReference type="OrthoDB" id="10069833at2759"/>
<dbReference type="PAN-GO" id="P98082">
    <property type="GO annotations" value="5 GO annotations based on evolutionary models"/>
</dbReference>
<dbReference type="PhylomeDB" id="P98082"/>
<dbReference type="TreeFam" id="TF316724"/>
<dbReference type="PathwayCommons" id="P98082"/>
<dbReference type="Reactome" id="R-HSA-190873">
    <property type="pathway name" value="Gap junction degradation"/>
</dbReference>
<dbReference type="Reactome" id="R-HSA-196025">
    <property type="pathway name" value="Formation of annular gap junctions"/>
</dbReference>
<dbReference type="Reactome" id="R-HSA-8856825">
    <property type="pathway name" value="Cargo recognition for clathrin-mediated endocytosis"/>
</dbReference>
<dbReference type="Reactome" id="R-HSA-8856828">
    <property type="pathway name" value="Clathrin-mediated endocytosis"/>
</dbReference>
<dbReference type="SignaLink" id="P98082"/>
<dbReference type="SIGNOR" id="P98082"/>
<dbReference type="BioGRID-ORCS" id="1601">
    <property type="hits" value="11 hits in 1161 CRISPR screens"/>
</dbReference>
<dbReference type="ChiTaRS" id="DAB2">
    <property type="organism name" value="human"/>
</dbReference>
<dbReference type="EvolutionaryTrace" id="P98082"/>
<dbReference type="GeneWiki" id="DAB2"/>
<dbReference type="GenomeRNAi" id="1601"/>
<dbReference type="Pharos" id="P98082">
    <property type="development level" value="Tbio"/>
</dbReference>
<dbReference type="PRO" id="PR:P98082"/>
<dbReference type="Proteomes" id="UP000005640">
    <property type="component" value="Chromosome 5"/>
</dbReference>
<dbReference type="RNAct" id="P98082">
    <property type="molecule type" value="protein"/>
</dbReference>
<dbReference type="Bgee" id="ENSG00000153071">
    <property type="expression patterns" value="Expressed in caput epididymis and 202 other cell types or tissues"/>
</dbReference>
<dbReference type="ExpressionAtlas" id="P98082">
    <property type="expression patterns" value="baseline and differential"/>
</dbReference>
<dbReference type="GO" id="GO:0005905">
    <property type="term" value="C:clathrin-coated pit"/>
    <property type="evidence" value="ECO:0000314"/>
    <property type="project" value="UniProtKB"/>
</dbReference>
<dbReference type="GO" id="GO:0030136">
    <property type="term" value="C:clathrin-coated vesicle"/>
    <property type="evidence" value="ECO:0000314"/>
    <property type="project" value="UniProtKB"/>
</dbReference>
<dbReference type="GO" id="GO:0030665">
    <property type="term" value="C:clathrin-coated vesicle membrane"/>
    <property type="evidence" value="ECO:0007669"/>
    <property type="project" value="UniProtKB-SubCell"/>
</dbReference>
<dbReference type="GO" id="GO:0005737">
    <property type="term" value="C:cytoplasm"/>
    <property type="evidence" value="ECO:0000318"/>
    <property type="project" value="GO_Central"/>
</dbReference>
<dbReference type="GO" id="GO:0005829">
    <property type="term" value="C:cytosol"/>
    <property type="evidence" value="ECO:0000304"/>
    <property type="project" value="Reactome"/>
</dbReference>
<dbReference type="GO" id="GO:0001650">
    <property type="term" value="C:fibrillar center"/>
    <property type="evidence" value="ECO:0000314"/>
    <property type="project" value="HPA"/>
</dbReference>
<dbReference type="GO" id="GO:0005925">
    <property type="term" value="C:focal adhesion"/>
    <property type="evidence" value="ECO:0007005"/>
    <property type="project" value="UniProtKB"/>
</dbReference>
<dbReference type="GO" id="GO:0043231">
    <property type="term" value="C:intracellular membrane-bounded organelle"/>
    <property type="evidence" value="ECO:0000314"/>
    <property type="project" value="HPA"/>
</dbReference>
<dbReference type="GO" id="GO:0005765">
    <property type="term" value="C:lysosomal membrane"/>
    <property type="evidence" value="ECO:0000304"/>
    <property type="project" value="Reactome"/>
</dbReference>
<dbReference type="GO" id="GO:0048471">
    <property type="term" value="C:perinuclear region of cytoplasm"/>
    <property type="evidence" value="ECO:0007669"/>
    <property type="project" value="Ensembl"/>
</dbReference>
<dbReference type="GO" id="GO:0005886">
    <property type="term" value="C:plasma membrane"/>
    <property type="evidence" value="ECO:0000314"/>
    <property type="project" value="HPA"/>
</dbReference>
<dbReference type="GO" id="GO:0038024">
    <property type="term" value="F:cargo receptor activity"/>
    <property type="evidence" value="ECO:0000315"/>
    <property type="project" value="UniProtKB"/>
</dbReference>
<dbReference type="GO" id="GO:0035615">
    <property type="term" value="F:clathrin adaptor activity"/>
    <property type="evidence" value="ECO:0000315"/>
    <property type="project" value="UniProtKB"/>
</dbReference>
<dbReference type="GO" id="GO:0050750">
    <property type="term" value="F:low-density lipoprotein particle receptor binding"/>
    <property type="evidence" value="ECO:0007669"/>
    <property type="project" value="Ensembl"/>
</dbReference>
<dbReference type="GO" id="GO:0046332">
    <property type="term" value="F:SMAD binding"/>
    <property type="evidence" value="ECO:0000314"/>
    <property type="project" value="UniProtKB"/>
</dbReference>
<dbReference type="GO" id="GO:0006915">
    <property type="term" value="P:apoptotic process"/>
    <property type="evidence" value="ECO:0007669"/>
    <property type="project" value="UniProtKB-KW"/>
</dbReference>
<dbReference type="GO" id="GO:0071364">
    <property type="term" value="P:cellular response to epidermal growth factor stimulus"/>
    <property type="evidence" value="ECO:0007669"/>
    <property type="project" value="Ensembl"/>
</dbReference>
<dbReference type="GO" id="GO:0048268">
    <property type="term" value="P:clathrin coat assembly"/>
    <property type="evidence" value="ECO:0007669"/>
    <property type="project" value="Ensembl"/>
</dbReference>
<dbReference type="GO" id="GO:0035026">
    <property type="term" value="P:leading edge cell differentiation"/>
    <property type="evidence" value="ECO:0000315"/>
    <property type="project" value="UniProtKB"/>
</dbReference>
<dbReference type="GO" id="GO:0060766">
    <property type="term" value="P:negative regulation of androgen receptor signaling pathway"/>
    <property type="evidence" value="ECO:0000315"/>
    <property type="project" value="UniProtKB"/>
</dbReference>
<dbReference type="GO" id="GO:0043066">
    <property type="term" value="P:negative regulation of apoptotic process"/>
    <property type="evidence" value="ECO:0000314"/>
    <property type="project" value="UniProtKB"/>
</dbReference>
<dbReference type="GO" id="GO:0090090">
    <property type="term" value="P:negative regulation of canonical Wnt signaling pathway"/>
    <property type="evidence" value="ECO:0000315"/>
    <property type="project" value="BHF-UCL"/>
</dbReference>
<dbReference type="GO" id="GO:0030308">
    <property type="term" value="P:negative regulation of cell growth"/>
    <property type="evidence" value="ECO:0007669"/>
    <property type="project" value="Ensembl"/>
</dbReference>
<dbReference type="GO" id="GO:0050680">
    <property type="term" value="P:negative regulation of epithelial cell proliferation"/>
    <property type="evidence" value="ECO:0007669"/>
    <property type="project" value="Ensembl"/>
</dbReference>
<dbReference type="GO" id="GO:0070373">
    <property type="term" value="P:negative regulation of ERK1 and ERK2 cascade"/>
    <property type="evidence" value="ECO:0007669"/>
    <property type="project" value="Ensembl"/>
</dbReference>
<dbReference type="GO" id="GO:0010977">
    <property type="term" value="P:negative regulation of neuron projection development"/>
    <property type="evidence" value="ECO:0007669"/>
    <property type="project" value="Ensembl"/>
</dbReference>
<dbReference type="GO" id="GO:1903077">
    <property type="term" value="P:negative regulation of protein localization to plasma membrane"/>
    <property type="evidence" value="ECO:0000315"/>
    <property type="project" value="UniProtKB"/>
</dbReference>
<dbReference type="GO" id="GO:0000122">
    <property type="term" value="P:negative regulation of transcription by RNA polymerase II"/>
    <property type="evidence" value="ECO:0000315"/>
    <property type="project" value="BHF-UCL"/>
</dbReference>
<dbReference type="GO" id="GO:0032349">
    <property type="term" value="P:positive regulation of aldosterone biosynthetic process"/>
    <property type="evidence" value="ECO:0007669"/>
    <property type="project" value="Ensembl"/>
</dbReference>
<dbReference type="GO" id="GO:2000860">
    <property type="term" value="P:positive regulation of aldosterone secretion"/>
    <property type="evidence" value="ECO:0007669"/>
    <property type="project" value="Ensembl"/>
</dbReference>
<dbReference type="GO" id="GO:0030335">
    <property type="term" value="P:positive regulation of cell migration"/>
    <property type="evidence" value="ECO:0000315"/>
    <property type="project" value="UniProtKB"/>
</dbReference>
<dbReference type="GO" id="GO:2000370">
    <property type="term" value="P:positive regulation of clathrin-dependent endocytosis"/>
    <property type="evidence" value="ECO:0000315"/>
    <property type="project" value="UniProtKB"/>
</dbReference>
<dbReference type="GO" id="GO:2000643">
    <property type="term" value="P:positive regulation of early endosome to late endosome transport"/>
    <property type="evidence" value="ECO:0000315"/>
    <property type="project" value="UniProtKB"/>
</dbReference>
<dbReference type="GO" id="GO:0045807">
    <property type="term" value="P:positive regulation of endocytosis"/>
    <property type="evidence" value="ECO:0000315"/>
    <property type="project" value="UniProtKB"/>
</dbReference>
<dbReference type="GO" id="GO:0010718">
    <property type="term" value="P:positive regulation of epithelial to mesenchymal transition"/>
    <property type="evidence" value="ECO:0000314"/>
    <property type="project" value="UniProtKB"/>
</dbReference>
<dbReference type="GO" id="GO:0032436">
    <property type="term" value="P:positive regulation of proteasomal ubiquitin-dependent protein catabolic process"/>
    <property type="evidence" value="ECO:0000315"/>
    <property type="project" value="BHF-UCL"/>
</dbReference>
<dbReference type="GO" id="GO:0060391">
    <property type="term" value="P:positive regulation of SMAD protein signal transduction"/>
    <property type="evidence" value="ECO:0000314"/>
    <property type="project" value="UniProtKB"/>
</dbReference>
<dbReference type="GO" id="GO:1900026">
    <property type="term" value="P:positive regulation of substrate adhesion-dependent cell spreading"/>
    <property type="evidence" value="ECO:0007669"/>
    <property type="project" value="Ensembl"/>
</dbReference>
<dbReference type="GO" id="GO:0045944">
    <property type="term" value="P:positive regulation of transcription by RNA polymerase II"/>
    <property type="evidence" value="ECO:0000315"/>
    <property type="project" value="BHF-UCL"/>
</dbReference>
<dbReference type="GO" id="GO:2000096">
    <property type="term" value="P:positive regulation of Wnt signaling pathway, planar cell polarity pathway"/>
    <property type="evidence" value="ECO:0000315"/>
    <property type="project" value="BHF-UCL"/>
</dbReference>
<dbReference type="GO" id="GO:0015031">
    <property type="term" value="P:protein transport"/>
    <property type="evidence" value="ECO:0007669"/>
    <property type="project" value="UniProtKB-KW"/>
</dbReference>
<dbReference type="GO" id="GO:0006898">
    <property type="term" value="P:receptor-mediated endocytosis"/>
    <property type="evidence" value="ECO:0000318"/>
    <property type="project" value="GO_Central"/>
</dbReference>
<dbReference type="GO" id="GO:1902074">
    <property type="term" value="P:response to salt"/>
    <property type="evidence" value="ECO:0007669"/>
    <property type="project" value="Ensembl"/>
</dbReference>
<dbReference type="GO" id="GO:0048545">
    <property type="term" value="P:response to steroid hormone"/>
    <property type="evidence" value="ECO:0007669"/>
    <property type="project" value="Ensembl"/>
</dbReference>
<dbReference type="GO" id="GO:0007179">
    <property type="term" value="P:transforming growth factor beta receptor signaling pathway"/>
    <property type="evidence" value="ECO:0000314"/>
    <property type="project" value="UniProtKB"/>
</dbReference>
<dbReference type="GO" id="GO:0016055">
    <property type="term" value="P:Wnt signaling pathway"/>
    <property type="evidence" value="ECO:0007669"/>
    <property type="project" value="UniProtKB-KW"/>
</dbReference>
<dbReference type="CDD" id="cd01215">
    <property type="entry name" value="PTB_Dab"/>
    <property type="match status" value="1"/>
</dbReference>
<dbReference type="FunFam" id="2.30.29.30:FF:000035">
    <property type="entry name" value="Disabled homolog 2 isoform 1"/>
    <property type="match status" value="1"/>
</dbReference>
<dbReference type="Gene3D" id="2.30.29.30">
    <property type="entry name" value="Pleckstrin-homology domain (PH domain)/Phosphotyrosine-binding domain (PTB)"/>
    <property type="match status" value="1"/>
</dbReference>
<dbReference type="InterPro" id="IPR048559">
    <property type="entry name" value="DAB1/2_SBM"/>
</dbReference>
<dbReference type="InterPro" id="IPR048561">
    <property type="entry name" value="Dab_PTB"/>
</dbReference>
<dbReference type="InterPro" id="IPR011993">
    <property type="entry name" value="PH-like_dom_sf"/>
</dbReference>
<dbReference type="InterPro" id="IPR006020">
    <property type="entry name" value="PTB/PI_dom"/>
</dbReference>
<dbReference type="PANTHER" id="PTHR47695:SF5">
    <property type="entry name" value="DISABLED HOMOLOG 2"/>
    <property type="match status" value="1"/>
</dbReference>
<dbReference type="PANTHER" id="PTHR47695">
    <property type="entry name" value="PID DOMAIN-CONTAINING PROTEIN"/>
    <property type="match status" value="1"/>
</dbReference>
<dbReference type="Pfam" id="PF21792">
    <property type="entry name" value="DAB2_SBM"/>
    <property type="match status" value="1"/>
</dbReference>
<dbReference type="Pfam" id="PF00640">
    <property type="entry name" value="PID"/>
    <property type="match status" value="1"/>
</dbReference>
<dbReference type="SMART" id="SM00462">
    <property type="entry name" value="PTB"/>
    <property type="match status" value="1"/>
</dbReference>
<dbReference type="SUPFAM" id="SSF50729">
    <property type="entry name" value="PH domain-like"/>
    <property type="match status" value="1"/>
</dbReference>
<dbReference type="PROSITE" id="PS01179">
    <property type="entry name" value="PID"/>
    <property type="match status" value="1"/>
</dbReference>
<name>DAB2_HUMAN</name>
<keyword id="KW-0002">3D-structure</keyword>
<keyword id="KW-0007">Acetylation</keyword>
<keyword id="KW-0025">Alternative splicing</keyword>
<keyword id="KW-0053">Apoptosis</keyword>
<keyword id="KW-0168">Coated pit</keyword>
<keyword id="KW-0963">Cytoplasm</keyword>
<keyword id="KW-0968">Cytoplasmic vesicle</keyword>
<keyword id="KW-0217">Developmental protein</keyword>
<keyword id="KW-0221">Differentiation</keyword>
<keyword id="KW-0254">Endocytosis</keyword>
<keyword id="KW-0472">Membrane</keyword>
<keyword id="KW-0597">Phosphoprotein</keyword>
<keyword id="KW-0653">Protein transport</keyword>
<keyword id="KW-1267">Proteomics identification</keyword>
<keyword id="KW-1185">Reference proteome</keyword>
<keyword id="KW-0813">Transport</keyword>
<keyword id="KW-0043">Tumor suppressor</keyword>
<keyword id="KW-0879">Wnt signaling pathway</keyword>
<organism>
    <name type="scientific">Homo sapiens</name>
    <name type="common">Human</name>
    <dbReference type="NCBI Taxonomy" id="9606"/>
    <lineage>
        <taxon>Eukaryota</taxon>
        <taxon>Metazoa</taxon>
        <taxon>Chordata</taxon>
        <taxon>Craniata</taxon>
        <taxon>Vertebrata</taxon>
        <taxon>Euteleostomi</taxon>
        <taxon>Mammalia</taxon>
        <taxon>Eutheria</taxon>
        <taxon>Euarchontoglires</taxon>
        <taxon>Primates</taxon>
        <taxon>Haplorrhini</taxon>
        <taxon>Catarrhini</taxon>
        <taxon>Hominidae</taxon>
        <taxon>Homo</taxon>
    </lineage>
</organism>